<gene>
    <name type="primary">ldh</name>
    <name type="synonym">ldhL</name>
</gene>
<feature type="chain" id="PRO_0000168378" description="L-lactate dehydrogenase">
    <location>
        <begin position="1"/>
        <end position="318"/>
    </location>
</feature>
<feature type="active site" description="Proton acceptor" evidence="1">
    <location>
        <position position="180"/>
    </location>
</feature>
<feature type="binding site" evidence="1">
    <location>
        <begin position="13"/>
        <end position="41"/>
    </location>
    <ligand>
        <name>NAD(+)</name>
        <dbReference type="ChEBI" id="CHEBI:57540"/>
    </ligand>
</feature>
<feature type="binding site" evidence="1">
    <location>
        <position position="93"/>
    </location>
    <ligand>
        <name>substrate</name>
    </ligand>
</feature>
<feature type="binding site" evidence="1">
    <location>
        <position position="125"/>
    </location>
    <ligand>
        <name>NAD(+)</name>
        <dbReference type="ChEBI" id="CHEBI:57540"/>
    </ligand>
</feature>
<feature type="binding site" evidence="1">
    <location>
        <position position="125"/>
    </location>
    <ligand>
        <name>substrate</name>
    </ligand>
</feature>
<feature type="binding site" evidence="1">
    <location>
        <position position="156"/>
    </location>
    <ligand>
        <name>substrate</name>
    </ligand>
</feature>
<feature type="binding site" evidence="1">
    <location>
        <position position="234"/>
    </location>
    <ligand>
        <name>substrate</name>
    </ligand>
</feature>
<feature type="modified residue" description="Phosphotyrosine" evidence="1">
    <location>
        <position position="225"/>
    </location>
</feature>
<feature type="strand" evidence="4">
    <location>
        <begin position="6"/>
        <end position="10"/>
    </location>
</feature>
<feature type="helix" evidence="4">
    <location>
        <begin position="14"/>
        <end position="25"/>
    </location>
</feature>
<feature type="strand" evidence="4">
    <location>
        <begin position="30"/>
        <end position="35"/>
    </location>
</feature>
<feature type="helix" evidence="4">
    <location>
        <begin position="39"/>
        <end position="52"/>
    </location>
</feature>
<feature type="strand" evidence="5">
    <location>
        <begin position="55"/>
        <end position="58"/>
    </location>
</feature>
<feature type="strand" evidence="4">
    <location>
        <begin position="62"/>
        <end position="65"/>
    </location>
</feature>
<feature type="helix" evidence="4">
    <location>
        <begin position="68"/>
        <end position="71"/>
    </location>
</feature>
<feature type="strand" evidence="4">
    <location>
        <begin position="75"/>
        <end position="79"/>
    </location>
</feature>
<feature type="helix" evidence="4">
    <location>
        <begin position="93"/>
        <end position="96"/>
    </location>
</feature>
<feature type="helix" evidence="4">
    <location>
        <begin position="97"/>
        <end position="114"/>
    </location>
</feature>
<feature type="strand" evidence="4">
    <location>
        <begin position="116"/>
        <end position="122"/>
    </location>
</feature>
<feature type="strand" evidence="4">
    <location>
        <begin position="124"/>
        <end position="126"/>
    </location>
</feature>
<feature type="helix" evidence="4">
    <location>
        <begin position="127"/>
        <end position="136"/>
    </location>
</feature>
<feature type="helix" evidence="4">
    <location>
        <begin position="142"/>
        <end position="144"/>
    </location>
</feature>
<feature type="strand" evidence="4">
    <location>
        <begin position="145"/>
        <end position="147"/>
    </location>
</feature>
<feature type="helix" evidence="4">
    <location>
        <begin position="151"/>
        <end position="165"/>
    </location>
</feature>
<feature type="helix" evidence="4">
    <location>
        <begin position="169"/>
        <end position="171"/>
    </location>
</feature>
<feature type="strand" evidence="4">
    <location>
        <begin position="172"/>
        <end position="178"/>
    </location>
</feature>
<feature type="strand" evidence="5">
    <location>
        <begin position="180"/>
        <end position="182"/>
    </location>
</feature>
<feature type="strand" evidence="4">
    <location>
        <begin position="184"/>
        <end position="193"/>
    </location>
</feature>
<feature type="helix" evidence="4">
    <location>
        <begin position="198"/>
        <end position="200"/>
    </location>
</feature>
<feature type="helix" evidence="4">
    <location>
        <begin position="201"/>
        <end position="204"/>
    </location>
</feature>
<feature type="helix" evidence="4">
    <location>
        <begin position="213"/>
        <end position="231"/>
    </location>
</feature>
<feature type="helix" evidence="4">
    <location>
        <begin position="236"/>
        <end position="250"/>
    </location>
</feature>
<feature type="strand" evidence="4">
    <location>
        <begin position="255"/>
        <end position="265"/>
    </location>
</feature>
<feature type="helix" evidence="4">
    <location>
        <begin position="266"/>
        <end position="268"/>
    </location>
</feature>
<feature type="strand" evidence="4">
    <location>
        <begin position="270"/>
        <end position="281"/>
    </location>
</feature>
<feature type="strand" evidence="4">
    <location>
        <begin position="284"/>
        <end position="288"/>
    </location>
</feature>
<feature type="helix" evidence="4">
    <location>
        <begin position="295"/>
        <end position="314"/>
    </location>
</feature>
<accession>Q9EVR0</accession>
<dbReference type="EC" id="1.1.1.27"/>
<dbReference type="EMBL" id="AF287913">
    <property type="protein sequence ID" value="AAG01001.1"/>
    <property type="molecule type" value="Genomic_DNA"/>
</dbReference>
<dbReference type="RefSeq" id="WP_014423306.1">
    <property type="nucleotide sequence ID" value="NZ_SVCA01000005.1"/>
</dbReference>
<dbReference type="PDB" id="7NAY">
    <property type="method" value="X-ray"/>
    <property type="resolution" value="1.84 A"/>
    <property type="chains" value="A=1-318"/>
</dbReference>
<dbReference type="PDB" id="8Q3C">
    <property type="method" value="X-ray"/>
    <property type="resolution" value="3.10 A"/>
    <property type="chains" value="H/N/U/a=1-318"/>
</dbReference>
<dbReference type="PDBsum" id="7NAY"/>
<dbReference type="PDBsum" id="8Q3C"/>
<dbReference type="SMR" id="Q9EVR0"/>
<dbReference type="STRING" id="971.SAMN02910356_02113"/>
<dbReference type="eggNOG" id="COG0039">
    <property type="taxonomic scope" value="Bacteria"/>
</dbReference>
<dbReference type="OMA" id="EGQYGHK"/>
<dbReference type="OrthoDB" id="9802969at2"/>
<dbReference type="UniPathway" id="UPA00554">
    <property type="reaction ID" value="UER00611"/>
</dbReference>
<dbReference type="GO" id="GO:0005737">
    <property type="term" value="C:cytoplasm"/>
    <property type="evidence" value="ECO:0007669"/>
    <property type="project" value="UniProtKB-SubCell"/>
</dbReference>
<dbReference type="GO" id="GO:0004459">
    <property type="term" value="F:L-lactate dehydrogenase activity"/>
    <property type="evidence" value="ECO:0007669"/>
    <property type="project" value="UniProtKB-EC"/>
</dbReference>
<dbReference type="GO" id="GO:0006089">
    <property type="term" value="P:lactate metabolic process"/>
    <property type="evidence" value="ECO:0007669"/>
    <property type="project" value="TreeGrafter"/>
</dbReference>
<dbReference type="CDD" id="cd05290">
    <property type="entry name" value="LDH_3"/>
    <property type="match status" value="1"/>
</dbReference>
<dbReference type="Gene3D" id="3.90.110.10">
    <property type="entry name" value="Lactate dehydrogenase/glycoside hydrolase, family 4, C-terminal"/>
    <property type="match status" value="1"/>
</dbReference>
<dbReference type="Gene3D" id="3.40.50.720">
    <property type="entry name" value="NAD(P)-binding Rossmann-like Domain"/>
    <property type="match status" value="1"/>
</dbReference>
<dbReference type="InterPro" id="IPR001557">
    <property type="entry name" value="L-lactate/malate_DH"/>
</dbReference>
<dbReference type="InterPro" id="IPR011304">
    <property type="entry name" value="L-lactate_DH"/>
</dbReference>
<dbReference type="InterPro" id="IPR022383">
    <property type="entry name" value="Lactate/malate_DH_C"/>
</dbReference>
<dbReference type="InterPro" id="IPR001236">
    <property type="entry name" value="Lactate/malate_DH_N"/>
</dbReference>
<dbReference type="InterPro" id="IPR015955">
    <property type="entry name" value="Lactate_DH/Glyco_Ohase_4_C"/>
</dbReference>
<dbReference type="InterPro" id="IPR036291">
    <property type="entry name" value="NAD(P)-bd_dom_sf"/>
</dbReference>
<dbReference type="NCBIfam" id="TIGR01771">
    <property type="entry name" value="L-LDH-NAD"/>
    <property type="match status" value="1"/>
</dbReference>
<dbReference type="PANTHER" id="PTHR43128">
    <property type="entry name" value="L-2-HYDROXYCARBOXYLATE DEHYDROGENASE (NAD(P)(+))"/>
    <property type="match status" value="1"/>
</dbReference>
<dbReference type="PANTHER" id="PTHR43128:SF16">
    <property type="entry name" value="L-LACTATE DEHYDROGENASE"/>
    <property type="match status" value="1"/>
</dbReference>
<dbReference type="Pfam" id="PF02866">
    <property type="entry name" value="Ldh_1_C"/>
    <property type="match status" value="1"/>
</dbReference>
<dbReference type="Pfam" id="PF00056">
    <property type="entry name" value="Ldh_1_N"/>
    <property type="match status" value="1"/>
</dbReference>
<dbReference type="PIRSF" id="PIRSF000102">
    <property type="entry name" value="Lac_mal_DH"/>
    <property type="match status" value="1"/>
</dbReference>
<dbReference type="PRINTS" id="PR00086">
    <property type="entry name" value="LLDHDRGNASE"/>
</dbReference>
<dbReference type="SUPFAM" id="SSF56327">
    <property type="entry name" value="LDH C-terminal domain-like"/>
    <property type="match status" value="1"/>
</dbReference>
<dbReference type="SUPFAM" id="SSF51735">
    <property type="entry name" value="NAD(P)-binding Rossmann-fold domains"/>
    <property type="match status" value="1"/>
</dbReference>
<protein>
    <recommendedName>
        <fullName>L-lactate dehydrogenase</fullName>
        <shortName>L-LDH</shortName>
        <ecNumber>1.1.1.27</ecNumber>
    </recommendedName>
</protein>
<comment type="catalytic activity">
    <reaction evidence="2">
        <text>(S)-lactate + NAD(+) = pyruvate + NADH + H(+)</text>
        <dbReference type="Rhea" id="RHEA:23444"/>
        <dbReference type="ChEBI" id="CHEBI:15361"/>
        <dbReference type="ChEBI" id="CHEBI:15378"/>
        <dbReference type="ChEBI" id="CHEBI:16651"/>
        <dbReference type="ChEBI" id="CHEBI:57540"/>
        <dbReference type="ChEBI" id="CHEBI:57945"/>
        <dbReference type="EC" id="1.1.1.27"/>
    </reaction>
</comment>
<comment type="pathway">
    <text>Fermentation; pyruvate fermentation to lactate; (S)-lactate from pyruvate: step 1/1.</text>
</comment>
<comment type="subunit">
    <text evidence="1">Homotetramer.</text>
</comment>
<comment type="subcellular location">
    <subcellularLocation>
        <location evidence="1">Cytoplasm</location>
    </subcellularLocation>
</comment>
<comment type="similarity">
    <text evidence="3">Belongs to the LDH/MDH superfamily. LDH family.</text>
</comment>
<keyword id="KW-0002">3D-structure</keyword>
<keyword id="KW-0963">Cytoplasm</keyword>
<keyword id="KW-0520">NAD</keyword>
<keyword id="KW-0560">Oxidoreductase</keyword>
<keyword id="KW-0597">Phosphoprotein</keyword>
<proteinExistence type="evidence at protein level"/>
<name>LDH_SELRU</name>
<evidence type="ECO:0000250" key="1"/>
<evidence type="ECO:0000269" key="2">
    <source>
    </source>
</evidence>
<evidence type="ECO:0000305" key="3"/>
<evidence type="ECO:0007829" key="4">
    <source>
        <dbReference type="PDB" id="7NAY"/>
    </source>
</evidence>
<evidence type="ECO:0007829" key="5">
    <source>
        <dbReference type="PDB" id="8Q3C"/>
    </source>
</evidence>
<sequence>MNNRRKIVVIGASNVGSAVANKIADFQLATEVVLIDLNEDKAWGEAKDSSHATSCIYSTNIKFHLGDYEDCKDANIIVITAGPSIRPGETPDRLKLAGTNAKIMSSVMGEIVKRTKEAMIIMITNPLDVATYVVSTQFDYPRNLILGTGTMLETYRFRRILADKYQVDPKNINGYVLGEHGNAAFVAWSTTGCAGFPIDDLDEYFHRTEKLSHEAVEQELVQVAYDVINKKGFTNTGIAMAACRFIKSVLYDEHTILPCSAVLEGEYGIKDVALSIPRMVCADGIMRSFEVHLTDDELEKMHKAAQSVRSALDGAGIK</sequence>
<reference key="1">
    <citation type="journal article" date="2002" name="Curr. Microbiol.">
        <title>Cloning of the L-lactate dehydrogenase gene from the ruminal bacterium Selenomonas ruminantium HD4.</title>
        <authorList>
            <person name="Evans J.D."/>
            <person name="Martin S.A."/>
        </authorList>
    </citation>
    <scope>NUCLEOTIDE SEQUENCE [GENOMIC DNA]</scope>
    <scope>CATALYTIC ACTIVITY</scope>
    <source>
        <strain>HD4</strain>
    </source>
</reference>
<organism>
    <name type="scientific">Selenomonas ruminantium</name>
    <dbReference type="NCBI Taxonomy" id="971"/>
    <lineage>
        <taxon>Bacteria</taxon>
        <taxon>Bacillati</taxon>
        <taxon>Bacillota</taxon>
        <taxon>Negativicutes</taxon>
        <taxon>Selenomonadales</taxon>
        <taxon>Selenomonadaceae</taxon>
        <taxon>Selenomonas</taxon>
    </lineage>
</organism>